<dbReference type="EMBL" id="AY327407">
    <property type="protein sequence ID" value="AAP92799.1"/>
    <property type="molecule type" value="mRNA"/>
</dbReference>
<dbReference type="EMBL" id="AC010747">
    <property type="status" value="NOT_ANNOTATED_CDS"/>
    <property type="molecule type" value="Genomic_DNA"/>
</dbReference>
<dbReference type="EMBL" id="AC112720">
    <property type="status" value="NOT_ANNOTATED_CDS"/>
    <property type="molecule type" value="Genomic_DNA"/>
</dbReference>
<dbReference type="EMBL" id="AC096667">
    <property type="status" value="NOT_ANNOTATED_CDS"/>
    <property type="molecule type" value="Genomic_DNA"/>
</dbReference>
<dbReference type="EMBL" id="BC150198">
    <property type="protein sequence ID" value="AAI50199.1"/>
    <property type="molecule type" value="mRNA"/>
</dbReference>
<dbReference type="EMBL" id="AK131402">
    <property type="protein sequence ID" value="BAD18549.1"/>
    <property type="molecule type" value="mRNA"/>
</dbReference>
<dbReference type="CCDS" id="CCDS2291.1"/>
<dbReference type="RefSeq" id="NP_919226.1">
    <property type="nucleotide sequence ID" value="NM_194250.2"/>
</dbReference>
<dbReference type="SMR" id="Q7Z570"/>
<dbReference type="BioGRID" id="124875">
    <property type="interactions" value="9"/>
</dbReference>
<dbReference type="FunCoup" id="Q7Z570">
    <property type="interactions" value="148"/>
</dbReference>
<dbReference type="IntAct" id="Q7Z570">
    <property type="interactions" value="5"/>
</dbReference>
<dbReference type="STRING" id="9606.ENSP00000303252"/>
<dbReference type="GlyGen" id="Q7Z570">
    <property type="glycosylation" value="1 site, 1 O-linked glycan (1 site)"/>
</dbReference>
<dbReference type="iPTMnet" id="Q7Z570"/>
<dbReference type="PhosphoSitePlus" id="Q7Z570"/>
<dbReference type="BioMuta" id="ZNF804A"/>
<dbReference type="DMDM" id="224471869"/>
<dbReference type="jPOST" id="Q7Z570"/>
<dbReference type="MassIVE" id="Q7Z570"/>
<dbReference type="PaxDb" id="9606-ENSP00000303252"/>
<dbReference type="PeptideAtlas" id="Q7Z570"/>
<dbReference type="ProteomicsDB" id="69261"/>
<dbReference type="Antibodypedia" id="33997">
    <property type="antibodies" value="29 antibodies from 11 providers"/>
</dbReference>
<dbReference type="DNASU" id="91752"/>
<dbReference type="Ensembl" id="ENST00000302277.7">
    <property type="protein sequence ID" value="ENSP00000303252.6"/>
    <property type="gene ID" value="ENSG00000170396.9"/>
</dbReference>
<dbReference type="GeneID" id="91752"/>
<dbReference type="KEGG" id="hsa:91752"/>
<dbReference type="MANE-Select" id="ENST00000302277.7">
    <property type="protein sequence ID" value="ENSP00000303252.6"/>
    <property type="RefSeq nucleotide sequence ID" value="NM_194250.2"/>
    <property type="RefSeq protein sequence ID" value="NP_919226.1"/>
</dbReference>
<dbReference type="UCSC" id="uc002uph.4">
    <property type="organism name" value="human"/>
</dbReference>
<dbReference type="AGR" id="HGNC:21711"/>
<dbReference type="CTD" id="91752"/>
<dbReference type="DisGeNET" id="91752"/>
<dbReference type="GeneCards" id="ZNF804A"/>
<dbReference type="HGNC" id="HGNC:21711">
    <property type="gene designation" value="ZNF804A"/>
</dbReference>
<dbReference type="HPA" id="ENSG00000170396">
    <property type="expression patterns" value="Tissue enhanced (brain, retina)"/>
</dbReference>
<dbReference type="MalaCards" id="ZNF804A"/>
<dbReference type="MIM" id="612282">
    <property type="type" value="gene"/>
</dbReference>
<dbReference type="neXtProt" id="NX_Q7Z570"/>
<dbReference type="OpenTargets" id="ENSG00000170396"/>
<dbReference type="PharmGKB" id="PA162410599"/>
<dbReference type="VEuPathDB" id="HostDB:ENSG00000170396"/>
<dbReference type="eggNOG" id="ENOG502QQR4">
    <property type="taxonomic scope" value="Eukaryota"/>
</dbReference>
<dbReference type="GeneTree" id="ENSGT00940000160909"/>
<dbReference type="HOGENOM" id="CLU_276771_0_0_1"/>
<dbReference type="InParanoid" id="Q7Z570"/>
<dbReference type="OMA" id="THEHWFH"/>
<dbReference type="OrthoDB" id="4822at2759"/>
<dbReference type="PAN-GO" id="Q7Z570">
    <property type="GO annotations" value="1 GO annotation based on evolutionary models"/>
</dbReference>
<dbReference type="PhylomeDB" id="Q7Z570"/>
<dbReference type="TreeFam" id="TF332138"/>
<dbReference type="PathwayCommons" id="Q7Z570"/>
<dbReference type="SignaLink" id="Q7Z570"/>
<dbReference type="SIGNOR" id="Q7Z570"/>
<dbReference type="BioGRID-ORCS" id="91752">
    <property type="hits" value="12 hits in 1148 CRISPR screens"/>
</dbReference>
<dbReference type="ChiTaRS" id="ZNF804A">
    <property type="organism name" value="human"/>
</dbReference>
<dbReference type="GeneWiki" id="Zinc_finger_protein_804A"/>
<dbReference type="GenomeRNAi" id="91752"/>
<dbReference type="Pharos" id="Q7Z570">
    <property type="development level" value="Tbio"/>
</dbReference>
<dbReference type="PRO" id="PR:Q7Z570"/>
<dbReference type="Proteomes" id="UP000005640">
    <property type="component" value="Chromosome 2"/>
</dbReference>
<dbReference type="RNAct" id="Q7Z570">
    <property type="molecule type" value="protein"/>
</dbReference>
<dbReference type="Bgee" id="ENSG00000170396">
    <property type="expression patterns" value="Expressed in ganglionic eminence and 102 other cell types or tissues"/>
</dbReference>
<dbReference type="GO" id="GO:0005737">
    <property type="term" value="C:cytoplasm"/>
    <property type="evidence" value="ECO:0000314"/>
    <property type="project" value="UniProtKB"/>
</dbReference>
<dbReference type="GO" id="GO:1901588">
    <property type="term" value="C:dendritic microtubule"/>
    <property type="evidence" value="ECO:0000314"/>
    <property type="project" value="UniProtKB"/>
</dbReference>
<dbReference type="GO" id="GO:0043198">
    <property type="term" value="C:dendritic shaft"/>
    <property type="evidence" value="ECO:0000314"/>
    <property type="project" value="UniProtKB"/>
</dbReference>
<dbReference type="GO" id="GO:0043197">
    <property type="term" value="C:dendritic spine"/>
    <property type="evidence" value="ECO:0000314"/>
    <property type="project" value="UniProtKB"/>
</dbReference>
<dbReference type="GO" id="GO:0030426">
    <property type="term" value="C:growth cone"/>
    <property type="evidence" value="ECO:0000314"/>
    <property type="project" value="UniProtKB"/>
</dbReference>
<dbReference type="GO" id="GO:0043025">
    <property type="term" value="C:neuronal cell body"/>
    <property type="evidence" value="ECO:0000314"/>
    <property type="project" value="UniProtKB"/>
</dbReference>
<dbReference type="GO" id="GO:0005634">
    <property type="term" value="C:nucleus"/>
    <property type="evidence" value="ECO:0000314"/>
    <property type="project" value="UniProtKB"/>
</dbReference>
<dbReference type="GO" id="GO:0005886">
    <property type="term" value="C:plasma membrane"/>
    <property type="evidence" value="ECO:0000314"/>
    <property type="project" value="UniProtKB"/>
</dbReference>
<dbReference type="GO" id="GO:0098794">
    <property type="term" value="C:postsynapse"/>
    <property type="evidence" value="ECO:0000314"/>
    <property type="project" value="UniProtKB"/>
</dbReference>
<dbReference type="GO" id="GO:0098793">
    <property type="term" value="C:presynapse"/>
    <property type="evidence" value="ECO:0007669"/>
    <property type="project" value="Ensembl"/>
</dbReference>
<dbReference type="GO" id="GO:0008270">
    <property type="term" value="F:zinc ion binding"/>
    <property type="evidence" value="ECO:0007669"/>
    <property type="project" value="UniProtKB-KW"/>
</dbReference>
<dbReference type="GO" id="GO:1902952">
    <property type="term" value="P:positive regulation of dendritic spine maintenance"/>
    <property type="evidence" value="ECO:0007669"/>
    <property type="project" value="Ensembl"/>
</dbReference>
<dbReference type="GO" id="GO:0010628">
    <property type="term" value="P:positive regulation of gene expression"/>
    <property type="evidence" value="ECO:0000315"/>
    <property type="project" value="UniProtKB"/>
</dbReference>
<dbReference type="GO" id="GO:0010976">
    <property type="term" value="P:positive regulation of neuron projection development"/>
    <property type="evidence" value="ECO:0000315"/>
    <property type="project" value="UniProtKB"/>
</dbReference>
<dbReference type="GO" id="GO:0010975">
    <property type="term" value="P:regulation of neuron projection development"/>
    <property type="evidence" value="ECO:0000316"/>
    <property type="project" value="UniProtKB"/>
</dbReference>
<dbReference type="InterPro" id="IPR052445">
    <property type="entry name" value="ZnF-G_patch_domain"/>
</dbReference>
<dbReference type="InterPro" id="IPR036236">
    <property type="entry name" value="Znf_C2H2_sf"/>
</dbReference>
<dbReference type="InterPro" id="IPR013087">
    <property type="entry name" value="Znf_C2H2_type"/>
</dbReference>
<dbReference type="PANTHER" id="PTHR17614:SF13">
    <property type="entry name" value="ZINC FINGER PROTEIN 804A"/>
    <property type="match status" value="1"/>
</dbReference>
<dbReference type="PANTHER" id="PTHR17614">
    <property type="entry name" value="ZINC FINGER-CONTAINING"/>
    <property type="match status" value="1"/>
</dbReference>
<dbReference type="SUPFAM" id="SSF57667">
    <property type="entry name" value="beta-beta-alpha zinc fingers"/>
    <property type="match status" value="1"/>
</dbReference>
<dbReference type="PROSITE" id="PS00028">
    <property type="entry name" value="ZINC_FINGER_C2H2_1"/>
    <property type="match status" value="1"/>
</dbReference>
<evidence type="ECO:0000256" key="1">
    <source>
        <dbReference type="SAM" id="MobiDB-lite"/>
    </source>
</evidence>
<evidence type="ECO:0000269" key="2">
    <source>
    </source>
</evidence>
<evidence type="ECO:0000269" key="3">
    <source>
    </source>
</evidence>
<evidence type="ECO:0000269" key="4">
    <source>
    </source>
</evidence>
<evidence type="ECO:0000305" key="5"/>
<sequence length="1209" mass="136888">MECYYIVISSTHLSNGHFRNIKGVFRGPLSKNGNKTLDYAEKENTIAKALEDLKANFYCELCDKQYYKHQEFDNHINSYDHAHKQRLKELKQREFARNVASKSRKDERKQEKALQRLHKLAELRKETVCAPGSGPMFKSTTVTVRENCNEISQRVVVDSVNNQQDFKYTLIHSEENTKDATTVAEDPESANNYTAKNNQVGDQAQGIHRHKIGFSFAFPKKASVKLESSAAAFSEYSDDASVGKGFSRKSRFVPSACHLQQSSPTDVLLSSEEKTNSFHPPEAMCRDKETVQTQEIKEVSSEKDALLLPSFCKFQLQLSSDADNCQNSVPLADQIPLESVVINEDIPVSGNSFELLGNKSTVLDMSNDCISVQATTEENVKHNEASTTEVENKNGPETLAPSNTEEVNITIHKKTNFCKRQCEPFVPVLNKHRSTVLQWPSEMLVYTTTKPSISYSCNPLCFDFKSTKVNNNLDKNKPDLKDLCSQQKQEDICMGPLSDYKDVSTEGLTDYEIGSSKNKCSQVTPLLADDILSSSCDSGKNENTGQRYKNISCKIRETEKYNFTKSQIKQDTLDEKYNKIRLKETHEYWFHKSRRKKKRKKLCQHHHMEKTKESETRCKMEAENSYTENAGKYLLEPISEKQYLAAEQLLDSHQLLDKRPKSESISLSDNEEMCKTWNTEYNTYDTISSKNHCKKNTILLNGQSNATMIHSGKHNLTYSRTYCCWKTKMSSCSQDHRSLVLQNDMKHMSQNQAVKRGYNSVMNESERFYRKRRQHSHSYSSDESLNRQNHLPEEFLRPPSTSVAPCKPKKKRRRKRGRFHPGFETLELKENTDYPVKDNSSLNPLDRLISEDKKEKMKPQEVAKIERNSEQTNQLRNKLSFHPNNLLPSETNGETEHLEMETTSGELSDVSNDPTTSVCVASAPTKEAIDNTLLEHKERSENINLNEKQIPFQVPNIERNFRQSQPKSYLCHYELAEALPQGKMNETPTEWLRYNSGILNTQPPLPFKEAHVSGHTFVTAEQILAPLALPEQALLIPLENHDKFKNVPCEVYQHILQPNMLANKVKFTFPPAALPPPSTPLQPLPLQQSLCSTSVTTIHHTVLQQHAAAAAAAAAAAAAGTFKVLQPHQQFLSQIPALTRTSLPQLSVGPVGPRLCPGNQPTFVAPPQMPIIPASVLHPSHLAFPSLPHALFPSLLSPHPTVIPLQPLF</sequence>
<proteinExistence type="evidence at protein level"/>
<reference key="1">
    <citation type="submission" date="2003-06" db="EMBL/GenBank/DDBJ databases">
        <authorList>
            <person name="Shan Y.X."/>
            <person name="Yu L."/>
        </authorList>
    </citation>
    <scope>NUCLEOTIDE SEQUENCE [MRNA]</scope>
</reference>
<reference key="2">
    <citation type="journal article" date="2005" name="Nature">
        <title>Generation and annotation of the DNA sequences of human chromosomes 2 and 4.</title>
        <authorList>
            <person name="Hillier L.W."/>
            <person name="Graves T.A."/>
            <person name="Fulton R.S."/>
            <person name="Fulton L.A."/>
            <person name="Pepin K.H."/>
            <person name="Minx P."/>
            <person name="Wagner-McPherson C."/>
            <person name="Layman D."/>
            <person name="Wylie K."/>
            <person name="Sekhon M."/>
            <person name="Becker M.C."/>
            <person name="Fewell G.A."/>
            <person name="Delehaunty K.D."/>
            <person name="Miner T.L."/>
            <person name="Nash W.E."/>
            <person name="Kremitzki C."/>
            <person name="Oddy L."/>
            <person name="Du H."/>
            <person name="Sun H."/>
            <person name="Bradshaw-Cordum H."/>
            <person name="Ali J."/>
            <person name="Carter J."/>
            <person name="Cordes M."/>
            <person name="Harris A."/>
            <person name="Isak A."/>
            <person name="van Brunt A."/>
            <person name="Nguyen C."/>
            <person name="Du F."/>
            <person name="Courtney L."/>
            <person name="Kalicki J."/>
            <person name="Ozersky P."/>
            <person name="Abbott S."/>
            <person name="Armstrong J."/>
            <person name="Belter E.A."/>
            <person name="Caruso L."/>
            <person name="Cedroni M."/>
            <person name="Cotton M."/>
            <person name="Davidson T."/>
            <person name="Desai A."/>
            <person name="Elliott G."/>
            <person name="Erb T."/>
            <person name="Fronick C."/>
            <person name="Gaige T."/>
            <person name="Haakenson W."/>
            <person name="Haglund K."/>
            <person name="Holmes A."/>
            <person name="Harkins R."/>
            <person name="Kim K."/>
            <person name="Kruchowski S.S."/>
            <person name="Strong C.M."/>
            <person name="Grewal N."/>
            <person name="Goyea E."/>
            <person name="Hou S."/>
            <person name="Levy A."/>
            <person name="Martinka S."/>
            <person name="Mead K."/>
            <person name="McLellan M.D."/>
            <person name="Meyer R."/>
            <person name="Randall-Maher J."/>
            <person name="Tomlinson C."/>
            <person name="Dauphin-Kohlberg S."/>
            <person name="Kozlowicz-Reilly A."/>
            <person name="Shah N."/>
            <person name="Swearengen-Shahid S."/>
            <person name="Snider J."/>
            <person name="Strong J.T."/>
            <person name="Thompson J."/>
            <person name="Yoakum M."/>
            <person name="Leonard S."/>
            <person name="Pearman C."/>
            <person name="Trani L."/>
            <person name="Radionenko M."/>
            <person name="Waligorski J.E."/>
            <person name="Wang C."/>
            <person name="Rock S.M."/>
            <person name="Tin-Wollam A.-M."/>
            <person name="Maupin R."/>
            <person name="Latreille P."/>
            <person name="Wendl M.C."/>
            <person name="Yang S.-P."/>
            <person name="Pohl C."/>
            <person name="Wallis J.W."/>
            <person name="Spieth J."/>
            <person name="Bieri T.A."/>
            <person name="Berkowicz N."/>
            <person name="Nelson J.O."/>
            <person name="Osborne J."/>
            <person name="Ding L."/>
            <person name="Meyer R."/>
            <person name="Sabo A."/>
            <person name="Shotland Y."/>
            <person name="Sinha P."/>
            <person name="Wohldmann P.E."/>
            <person name="Cook L.L."/>
            <person name="Hickenbotham M.T."/>
            <person name="Eldred J."/>
            <person name="Williams D."/>
            <person name="Jones T.A."/>
            <person name="She X."/>
            <person name="Ciccarelli F.D."/>
            <person name="Izaurralde E."/>
            <person name="Taylor J."/>
            <person name="Schmutz J."/>
            <person name="Myers R.M."/>
            <person name="Cox D.R."/>
            <person name="Huang X."/>
            <person name="McPherson J.D."/>
            <person name="Mardis E.R."/>
            <person name="Clifton S.W."/>
            <person name="Warren W.C."/>
            <person name="Chinwalla A.T."/>
            <person name="Eddy S.R."/>
            <person name="Marra M.A."/>
            <person name="Ovcharenko I."/>
            <person name="Furey T.S."/>
            <person name="Miller W."/>
            <person name="Eichler E.E."/>
            <person name="Bork P."/>
            <person name="Suyama M."/>
            <person name="Torrents D."/>
            <person name="Waterston R.H."/>
            <person name="Wilson R.K."/>
        </authorList>
    </citation>
    <scope>NUCLEOTIDE SEQUENCE [LARGE SCALE GENOMIC DNA]</scope>
</reference>
<reference key="3">
    <citation type="journal article" date="2004" name="Genome Res.">
        <title>The status, quality, and expansion of the NIH full-length cDNA project: the Mammalian Gene Collection (MGC).</title>
        <authorList>
            <consortium name="The MGC Project Team"/>
        </authorList>
    </citation>
    <scope>NUCLEOTIDE SEQUENCE [LARGE SCALE MRNA]</scope>
    <scope>VARIANTS GLY-479 AND ARG-747</scope>
</reference>
<reference key="4">
    <citation type="journal article" date="2004" name="Nat. Genet.">
        <title>Complete sequencing and characterization of 21,243 full-length human cDNAs.</title>
        <authorList>
            <person name="Ota T."/>
            <person name="Suzuki Y."/>
            <person name="Nishikawa T."/>
            <person name="Otsuki T."/>
            <person name="Sugiyama T."/>
            <person name="Irie R."/>
            <person name="Wakamatsu A."/>
            <person name="Hayashi K."/>
            <person name="Sato H."/>
            <person name="Nagai K."/>
            <person name="Kimura K."/>
            <person name="Makita H."/>
            <person name="Sekine M."/>
            <person name="Obayashi M."/>
            <person name="Nishi T."/>
            <person name="Shibahara T."/>
            <person name="Tanaka T."/>
            <person name="Ishii S."/>
            <person name="Yamamoto J."/>
            <person name="Saito K."/>
            <person name="Kawai Y."/>
            <person name="Isono Y."/>
            <person name="Nakamura Y."/>
            <person name="Nagahari K."/>
            <person name="Murakami K."/>
            <person name="Yasuda T."/>
            <person name="Iwayanagi T."/>
            <person name="Wagatsuma M."/>
            <person name="Shiratori A."/>
            <person name="Sudo H."/>
            <person name="Hosoiri T."/>
            <person name="Kaku Y."/>
            <person name="Kodaira H."/>
            <person name="Kondo H."/>
            <person name="Sugawara M."/>
            <person name="Takahashi M."/>
            <person name="Kanda K."/>
            <person name="Yokoi T."/>
            <person name="Furuya T."/>
            <person name="Kikkawa E."/>
            <person name="Omura Y."/>
            <person name="Abe K."/>
            <person name="Kamihara K."/>
            <person name="Katsuta N."/>
            <person name="Sato K."/>
            <person name="Tanikawa M."/>
            <person name="Yamazaki M."/>
            <person name="Ninomiya K."/>
            <person name="Ishibashi T."/>
            <person name="Yamashita H."/>
            <person name="Murakawa K."/>
            <person name="Fujimori K."/>
            <person name="Tanai H."/>
            <person name="Kimata M."/>
            <person name="Watanabe M."/>
            <person name="Hiraoka S."/>
            <person name="Chiba Y."/>
            <person name="Ishida S."/>
            <person name="Ono Y."/>
            <person name="Takiguchi S."/>
            <person name="Watanabe S."/>
            <person name="Yosida M."/>
            <person name="Hotuta T."/>
            <person name="Kusano J."/>
            <person name="Kanehori K."/>
            <person name="Takahashi-Fujii A."/>
            <person name="Hara H."/>
            <person name="Tanase T.-O."/>
            <person name="Nomura Y."/>
            <person name="Togiya S."/>
            <person name="Komai F."/>
            <person name="Hara R."/>
            <person name="Takeuchi K."/>
            <person name="Arita M."/>
            <person name="Imose N."/>
            <person name="Musashino K."/>
            <person name="Yuuki H."/>
            <person name="Oshima A."/>
            <person name="Sasaki N."/>
            <person name="Aotsuka S."/>
            <person name="Yoshikawa Y."/>
            <person name="Matsunawa H."/>
            <person name="Ichihara T."/>
            <person name="Shiohata N."/>
            <person name="Sano S."/>
            <person name="Moriya S."/>
            <person name="Momiyama H."/>
            <person name="Satoh N."/>
            <person name="Takami S."/>
            <person name="Terashima Y."/>
            <person name="Suzuki O."/>
            <person name="Nakagawa S."/>
            <person name="Senoh A."/>
            <person name="Mizoguchi H."/>
            <person name="Goto Y."/>
            <person name="Shimizu F."/>
            <person name="Wakebe H."/>
            <person name="Hishigaki H."/>
            <person name="Watanabe T."/>
            <person name="Sugiyama A."/>
            <person name="Takemoto M."/>
            <person name="Kawakami B."/>
            <person name="Yamazaki M."/>
            <person name="Watanabe K."/>
            <person name="Kumagai A."/>
            <person name="Itakura S."/>
            <person name="Fukuzumi Y."/>
            <person name="Fujimori Y."/>
            <person name="Komiyama M."/>
            <person name="Tashiro H."/>
            <person name="Tanigami A."/>
            <person name="Fujiwara T."/>
            <person name="Ono T."/>
            <person name="Yamada K."/>
            <person name="Fujii Y."/>
            <person name="Ozaki K."/>
            <person name="Hirao M."/>
            <person name="Ohmori Y."/>
            <person name="Kawabata A."/>
            <person name="Hikiji T."/>
            <person name="Kobatake N."/>
            <person name="Inagaki H."/>
            <person name="Ikema Y."/>
            <person name="Okamoto S."/>
            <person name="Okitani R."/>
            <person name="Kawakami T."/>
            <person name="Noguchi S."/>
            <person name="Itoh T."/>
            <person name="Shigeta K."/>
            <person name="Senba T."/>
            <person name="Matsumura K."/>
            <person name="Nakajima Y."/>
            <person name="Mizuno T."/>
            <person name="Morinaga M."/>
            <person name="Sasaki M."/>
            <person name="Togashi T."/>
            <person name="Oyama M."/>
            <person name="Hata H."/>
            <person name="Watanabe M."/>
            <person name="Komatsu T."/>
            <person name="Mizushima-Sugano J."/>
            <person name="Satoh T."/>
            <person name="Shirai Y."/>
            <person name="Takahashi Y."/>
            <person name="Nakagawa K."/>
            <person name="Okumura K."/>
            <person name="Nagase T."/>
            <person name="Nomura N."/>
            <person name="Kikuchi H."/>
            <person name="Masuho Y."/>
            <person name="Yamashita R."/>
            <person name="Nakai K."/>
            <person name="Yada T."/>
            <person name="Nakamura Y."/>
            <person name="Ohara O."/>
            <person name="Isogai T."/>
            <person name="Sugano S."/>
        </authorList>
    </citation>
    <scope>NUCLEOTIDE SEQUENCE [LARGE SCALE MRNA] OF 1-594</scope>
    <scope>VARIANTS LEU-261 AND LYS-542</scope>
    <source>
        <tissue>Brain</tissue>
    </source>
</reference>
<reference key="5">
    <citation type="journal article" date="2006" name="Science">
        <title>The consensus coding sequences of human breast and colorectal cancers.</title>
        <authorList>
            <person name="Sjoeblom T."/>
            <person name="Jones S."/>
            <person name="Wood L.D."/>
            <person name="Parsons D.W."/>
            <person name="Lin J."/>
            <person name="Barber T.D."/>
            <person name="Mandelker D."/>
            <person name="Leary R.J."/>
            <person name="Ptak J."/>
            <person name="Silliman N."/>
            <person name="Szabo S."/>
            <person name="Buckhaults P."/>
            <person name="Farrell C."/>
            <person name="Meeh P."/>
            <person name="Markowitz S.D."/>
            <person name="Willis J."/>
            <person name="Dawson D."/>
            <person name="Willson J.K.V."/>
            <person name="Gazdar A.F."/>
            <person name="Hartigan J."/>
            <person name="Wu L."/>
            <person name="Liu C."/>
            <person name="Parmigiani G."/>
            <person name="Park B.H."/>
            <person name="Bachman K.E."/>
            <person name="Papadopoulos N."/>
            <person name="Vogelstein B."/>
            <person name="Kinzler K.W."/>
            <person name="Velculescu V.E."/>
        </authorList>
    </citation>
    <scope>VARIANT [LARGE SCALE ANALYSIS] SER-324</scope>
</reference>
<gene>
    <name type="primary">ZNF804A</name>
    <name type="synonym">C2orf10</name>
</gene>
<accession>Q7Z570</accession>
<accession>A7E253</accession>
<accession>Q6ZN26</accession>
<organism>
    <name type="scientific">Homo sapiens</name>
    <name type="common">Human</name>
    <dbReference type="NCBI Taxonomy" id="9606"/>
    <lineage>
        <taxon>Eukaryota</taxon>
        <taxon>Metazoa</taxon>
        <taxon>Chordata</taxon>
        <taxon>Craniata</taxon>
        <taxon>Vertebrata</taxon>
        <taxon>Euteleostomi</taxon>
        <taxon>Mammalia</taxon>
        <taxon>Eutheria</taxon>
        <taxon>Euarchontoglires</taxon>
        <taxon>Primates</taxon>
        <taxon>Haplorrhini</taxon>
        <taxon>Catarrhini</taxon>
        <taxon>Hominidae</taxon>
        <taxon>Homo</taxon>
    </lineage>
</organism>
<name>Z804A_HUMAN</name>
<protein>
    <recommendedName>
        <fullName>Zinc finger protein 804A</fullName>
    </recommendedName>
</protein>
<feature type="chain" id="PRO_0000232518" description="Zinc finger protein 804A">
    <location>
        <begin position="1"/>
        <end position="1209"/>
    </location>
</feature>
<feature type="zinc finger region" description="C2H2-type">
    <location>
        <begin position="57"/>
        <end position="81"/>
    </location>
</feature>
<feature type="region of interest" description="Disordered" evidence="1">
    <location>
        <begin position="380"/>
        <end position="401"/>
    </location>
</feature>
<feature type="region of interest" description="Disordered" evidence="1">
    <location>
        <begin position="792"/>
        <end position="860"/>
    </location>
</feature>
<feature type="compositionally biased region" description="Basic and acidic residues" evidence="1">
    <location>
        <begin position="380"/>
        <end position="394"/>
    </location>
</feature>
<feature type="compositionally biased region" description="Basic residues" evidence="1">
    <location>
        <begin position="807"/>
        <end position="819"/>
    </location>
</feature>
<feature type="compositionally biased region" description="Basic and acidic residues" evidence="1">
    <location>
        <begin position="826"/>
        <end position="836"/>
    </location>
</feature>
<feature type="compositionally biased region" description="Basic and acidic residues" evidence="1">
    <location>
        <begin position="848"/>
        <end position="860"/>
    </location>
</feature>
<feature type="sequence variant" id="VAR_025943" description="In dbSNP:rs12476147." evidence="2">
    <original>Q</original>
    <variation>L</variation>
    <location>
        <position position="261"/>
    </location>
</feature>
<feature type="sequence variant" id="VAR_035599" description="In a colorectal cancer sample; somatic mutation." evidence="4">
    <original>N</original>
    <variation>S</variation>
    <location>
        <position position="324"/>
    </location>
</feature>
<feature type="sequence variant" id="VAR_054133" description="In dbSNP:rs35676856." evidence="3">
    <original>D</original>
    <variation>G</variation>
    <location>
        <position position="479"/>
    </location>
</feature>
<feature type="sequence variant" id="VAR_025944" description="In dbSNP:rs4667001." evidence="2">
    <original>E</original>
    <variation>K</variation>
    <location>
        <position position="542"/>
    </location>
</feature>
<feature type="sequence variant" id="VAR_054134" description="In dbSNP:rs35925696.">
    <original>K</original>
    <variation>R</variation>
    <location>
        <position position="600"/>
    </location>
</feature>
<feature type="sequence variant" id="VAR_025945" description="In dbSNP:rs1366842.">
    <original>T</original>
    <variation>K</variation>
    <location>
        <position position="707"/>
    </location>
</feature>
<feature type="sequence variant" id="VAR_025946" description="In dbSNP:rs12477430." evidence="3">
    <original>H</original>
    <variation>R</variation>
    <location>
        <position position="747"/>
    </location>
</feature>
<feature type="sequence variant" id="VAR_025947" description="In dbSNP:rs3731834.">
    <original>L</original>
    <variation>V</variation>
    <location>
        <position position="1081"/>
    </location>
</feature>
<feature type="sequence variant" id="VAR_054135" description="In dbSNP:rs12105159.">
    <original>G</original>
    <variation>R</variation>
    <location>
        <position position="1152"/>
    </location>
</feature>
<feature type="sequence conflict" description="In Ref. 3; AAI50199." evidence="5" ref="3">
    <original>I</original>
    <variation>V</variation>
    <location>
        <position position="492"/>
    </location>
</feature>
<feature type="sequence conflict" description="In Ref. 3; AAI50199." evidence="5" ref="3">
    <original>G</original>
    <variation>S</variation>
    <location>
        <position position="545"/>
    </location>
</feature>
<keyword id="KW-0479">Metal-binding</keyword>
<keyword id="KW-1267">Proteomics identification</keyword>
<keyword id="KW-1185">Reference proteome</keyword>
<keyword id="KW-0862">Zinc</keyword>
<keyword id="KW-0863">Zinc-finger</keyword>